<evidence type="ECO:0000255" key="1">
    <source>
        <dbReference type="HAMAP-Rule" id="MF_01546"/>
    </source>
</evidence>
<evidence type="ECO:0000305" key="2"/>
<accession>Q3YX05</accession>
<feature type="chain" id="PRO_0000300579" description="Protein AaeX">
    <location>
        <begin position="1"/>
        <end position="67"/>
    </location>
</feature>
<feature type="transmembrane region" description="Helical" evidence="1">
    <location>
        <begin position="3"/>
        <end position="23"/>
    </location>
</feature>
<feature type="transmembrane region" description="Helical" evidence="1">
    <location>
        <begin position="43"/>
        <end position="63"/>
    </location>
</feature>
<proteinExistence type="inferred from homology"/>
<comment type="subcellular location">
    <subcellularLocation>
        <location evidence="1">Cell membrane</location>
        <topology evidence="1">Multi-pass membrane protein</topology>
    </subcellularLocation>
</comment>
<comment type="similarity">
    <text evidence="1">Belongs to the AaeX family.</text>
</comment>
<comment type="sequence caution" evidence="2">
    <conflict type="erroneous initiation">
        <sequence resource="EMBL-CDS" id="AAZ89957"/>
    </conflict>
</comment>
<sequence length="67" mass="7847">MSLFPVIVVFGLSFPPIFFELLLSLAIFWLVRRVLVPTGIYDFVWHPALFNTALYCCLFYLISRLFV</sequence>
<protein>
    <recommendedName>
        <fullName evidence="1">Protein AaeX</fullName>
    </recommendedName>
</protein>
<keyword id="KW-1003">Cell membrane</keyword>
<keyword id="KW-0472">Membrane</keyword>
<keyword id="KW-1185">Reference proteome</keyword>
<keyword id="KW-0812">Transmembrane</keyword>
<keyword id="KW-1133">Transmembrane helix</keyword>
<dbReference type="EMBL" id="CP000038">
    <property type="protein sequence ID" value="AAZ89957.1"/>
    <property type="status" value="ALT_INIT"/>
    <property type="molecule type" value="Genomic_DNA"/>
</dbReference>
<dbReference type="RefSeq" id="WP_000051841.1">
    <property type="nucleotide sequence ID" value="NC_007384.1"/>
</dbReference>
<dbReference type="GeneID" id="93778743"/>
<dbReference type="KEGG" id="ssn:SSON_3384"/>
<dbReference type="HOGENOM" id="CLU_188292_0_0_6"/>
<dbReference type="Proteomes" id="UP000002529">
    <property type="component" value="Chromosome"/>
</dbReference>
<dbReference type="GO" id="GO:0005886">
    <property type="term" value="C:plasma membrane"/>
    <property type="evidence" value="ECO:0007669"/>
    <property type="project" value="UniProtKB-SubCell"/>
</dbReference>
<dbReference type="HAMAP" id="MF_01546">
    <property type="entry name" value="AaeX"/>
    <property type="match status" value="1"/>
</dbReference>
<dbReference type="InterPro" id="IPR012451">
    <property type="entry name" value="DUF1656"/>
</dbReference>
<dbReference type="NCBIfam" id="NF008615">
    <property type="entry name" value="PRK11594.1"/>
    <property type="match status" value="1"/>
</dbReference>
<dbReference type="Pfam" id="PF07869">
    <property type="entry name" value="DUF1656"/>
    <property type="match status" value="1"/>
</dbReference>
<reference key="1">
    <citation type="journal article" date="2005" name="Nucleic Acids Res.">
        <title>Genome dynamics and diversity of Shigella species, the etiologic agents of bacillary dysentery.</title>
        <authorList>
            <person name="Yang F."/>
            <person name="Yang J."/>
            <person name="Zhang X."/>
            <person name="Chen L."/>
            <person name="Jiang Y."/>
            <person name="Yan Y."/>
            <person name="Tang X."/>
            <person name="Wang J."/>
            <person name="Xiong Z."/>
            <person name="Dong J."/>
            <person name="Xue Y."/>
            <person name="Zhu Y."/>
            <person name="Xu X."/>
            <person name="Sun L."/>
            <person name="Chen S."/>
            <person name="Nie H."/>
            <person name="Peng J."/>
            <person name="Xu J."/>
            <person name="Wang Y."/>
            <person name="Yuan Z."/>
            <person name="Wen Y."/>
            <person name="Yao Z."/>
            <person name="Shen Y."/>
            <person name="Qiang B."/>
            <person name="Hou Y."/>
            <person name="Yu J."/>
            <person name="Jin Q."/>
        </authorList>
    </citation>
    <scope>NUCLEOTIDE SEQUENCE [LARGE SCALE GENOMIC DNA]</scope>
    <source>
        <strain>Ss046</strain>
    </source>
</reference>
<name>AAEX_SHISS</name>
<organism>
    <name type="scientific">Shigella sonnei (strain Ss046)</name>
    <dbReference type="NCBI Taxonomy" id="300269"/>
    <lineage>
        <taxon>Bacteria</taxon>
        <taxon>Pseudomonadati</taxon>
        <taxon>Pseudomonadota</taxon>
        <taxon>Gammaproteobacteria</taxon>
        <taxon>Enterobacterales</taxon>
        <taxon>Enterobacteriaceae</taxon>
        <taxon>Shigella</taxon>
    </lineage>
</organism>
<gene>
    <name evidence="1" type="primary">aaeX</name>
    <name type="ordered locus">SSON_3384</name>
</gene>